<feature type="chain" id="PRO_0000167438" description="Ribosome-recycling factor">
    <location>
        <begin position="1"/>
        <end position="180"/>
    </location>
</feature>
<organism>
    <name type="scientific">Chlamydia caviae (strain ATCC VR-813 / DSM 19441 / 03DC25 / GPIC)</name>
    <name type="common">Chlamydophila caviae</name>
    <dbReference type="NCBI Taxonomy" id="227941"/>
    <lineage>
        <taxon>Bacteria</taxon>
        <taxon>Pseudomonadati</taxon>
        <taxon>Chlamydiota</taxon>
        <taxon>Chlamydiia</taxon>
        <taxon>Chlamydiales</taxon>
        <taxon>Chlamydiaceae</taxon>
        <taxon>Chlamydia/Chlamydophila group</taxon>
        <taxon>Chlamydia</taxon>
    </lineage>
</organism>
<comment type="function">
    <text evidence="1">Responsible for the release of ribosomes from messenger RNA at the termination of protein biosynthesis. May increase the efficiency of translation by recycling ribosomes from one round of translation to another.</text>
</comment>
<comment type="subcellular location">
    <subcellularLocation>
        <location evidence="1">Cytoplasm</location>
    </subcellularLocation>
</comment>
<comment type="similarity">
    <text evidence="1">Belongs to the RRF family.</text>
</comment>
<gene>
    <name evidence="1" type="primary">frr</name>
    <name type="ordered locus">CCA_00043</name>
</gene>
<protein>
    <recommendedName>
        <fullName evidence="1">Ribosome-recycling factor</fullName>
        <shortName evidence="1">RRF</shortName>
    </recommendedName>
    <alternativeName>
        <fullName evidence="1">Ribosome-releasing factor</fullName>
    </alternativeName>
</protein>
<name>RRF_CHLCV</name>
<keyword id="KW-0963">Cytoplasm</keyword>
<keyword id="KW-0648">Protein biosynthesis</keyword>
<sequence>MSSLTDTEKKMAAALEFFHKEVRSFRTGKANPALVETVTVDVYGTTMRLSDLASISVADTRQLVISPYDANNVSAISKGIIAANLNLQPDVEGTIVRIKVPEPTAEYRNEVIKQLRRKSEEAKVAIRNIRRESNDKLKKDSDLTEDAVKGMEKKVQELTDKFCKQIDEITKQKEAELSSI</sequence>
<accession>Q824U6</accession>
<evidence type="ECO:0000255" key="1">
    <source>
        <dbReference type="HAMAP-Rule" id="MF_00040"/>
    </source>
</evidence>
<reference key="1">
    <citation type="journal article" date="2003" name="Nucleic Acids Res.">
        <title>Genome sequence of Chlamydophila caviae (Chlamydia psittaci GPIC): examining the role of niche-specific genes in the evolution of the Chlamydiaceae.</title>
        <authorList>
            <person name="Read T.D."/>
            <person name="Myers G.S.A."/>
            <person name="Brunham R.C."/>
            <person name="Nelson W.C."/>
            <person name="Paulsen I.T."/>
            <person name="Heidelberg J.F."/>
            <person name="Holtzapple E.K."/>
            <person name="Khouri H.M."/>
            <person name="Federova N.B."/>
            <person name="Carty H.A."/>
            <person name="Umayam L.A."/>
            <person name="Haft D.H."/>
            <person name="Peterson J.D."/>
            <person name="Beanan M.J."/>
            <person name="White O."/>
            <person name="Salzberg S.L."/>
            <person name="Hsia R.-C."/>
            <person name="McClarty G."/>
            <person name="Rank R.G."/>
            <person name="Bavoil P.M."/>
            <person name="Fraser C.M."/>
        </authorList>
    </citation>
    <scope>NUCLEOTIDE SEQUENCE [LARGE SCALE GENOMIC DNA]</scope>
    <source>
        <strain>ATCC VR-813 / DSM 19441 / 03DC25 / GPIC</strain>
    </source>
</reference>
<proteinExistence type="inferred from homology"/>
<dbReference type="EMBL" id="AE015925">
    <property type="protein sequence ID" value="AAP04795.1"/>
    <property type="molecule type" value="Genomic_DNA"/>
</dbReference>
<dbReference type="RefSeq" id="WP_011006016.1">
    <property type="nucleotide sequence ID" value="NC_003361.3"/>
</dbReference>
<dbReference type="SMR" id="Q824U6"/>
<dbReference type="STRING" id="227941.CCA_00043"/>
<dbReference type="KEGG" id="cca:CCA_00043"/>
<dbReference type="eggNOG" id="COG0233">
    <property type="taxonomic scope" value="Bacteria"/>
</dbReference>
<dbReference type="HOGENOM" id="CLU_073981_2_1_0"/>
<dbReference type="OrthoDB" id="9804006at2"/>
<dbReference type="Proteomes" id="UP000002193">
    <property type="component" value="Chromosome"/>
</dbReference>
<dbReference type="GO" id="GO:0005737">
    <property type="term" value="C:cytoplasm"/>
    <property type="evidence" value="ECO:0007669"/>
    <property type="project" value="UniProtKB-SubCell"/>
</dbReference>
<dbReference type="GO" id="GO:0043023">
    <property type="term" value="F:ribosomal large subunit binding"/>
    <property type="evidence" value="ECO:0007669"/>
    <property type="project" value="TreeGrafter"/>
</dbReference>
<dbReference type="GO" id="GO:0006415">
    <property type="term" value="P:translational termination"/>
    <property type="evidence" value="ECO:0007669"/>
    <property type="project" value="UniProtKB-UniRule"/>
</dbReference>
<dbReference type="CDD" id="cd00520">
    <property type="entry name" value="RRF"/>
    <property type="match status" value="1"/>
</dbReference>
<dbReference type="FunFam" id="1.10.132.20:FF:000001">
    <property type="entry name" value="Ribosome-recycling factor"/>
    <property type="match status" value="1"/>
</dbReference>
<dbReference type="FunFam" id="3.30.1360.40:FF:000001">
    <property type="entry name" value="Ribosome-recycling factor"/>
    <property type="match status" value="1"/>
</dbReference>
<dbReference type="Gene3D" id="3.30.1360.40">
    <property type="match status" value="1"/>
</dbReference>
<dbReference type="Gene3D" id="1.10.132.20">
    <property type="entry name" value="Ribosome-recycling factor"/>
    <property type="match status" value="1"/>
</dbReference>
<dbReference type="HAMAP" id="MF_00040">
    <property type="entry name" value="RRF"/>
    <property type="match status" value="1"/>
</dbReference>
<dbReference type="InterPro" id="IPR002661">
    <property type="entry name" value="Ribosome_recyc_fac"/>
</dbReference>
<dbReference type="InterPro" id="IPR023584">
    <property type="entry name" value="Ribosome_recyc_fac_dom"/>
</dbReference>
<dbReference type="InterPro" id="IPR036191">
    <property type="entry name" value="RRF_sf"/>
</dbReference>
<dbReference type="NCBIfam" id="TIGR00496">
    <property type="entry name" value="frr"/>
    <property type="match status" value="1"/>
</dbReference>
<dbReference type="PANTHER" id="PTHR20982:SF3">
    <property type="entry name" value="MITOCHONDRIAL RIBOSOME RECYCLING FACTOR PSEUDO 1"/>
    <property type="match status" value="1"/>
</dbReference>
<dbReference type="PANTHER" id="PTHR20982">
    <property type="entry name" value="RIBOSOME RECYCLING FACTOR"/>
    <property type="match status" value="1"/>
</dbReference>
<dbReference type="Pfam" id="PF01765">
    <property type="entry name" value="RRF"/>
    <property type="match status" value="1"/>
</dbReference>
<dbReference type="SUPFAM" id="SSF55194">
    <property type="entry name" value="Ribosome recycling factor, RRF"/>
    <property type="match status" value="1"/>
</dbReference>